<sequence>MSIQENLNNLIKPHGGKLIKTLKYGAERDECIKEAKSLPKIDISSREFGDLVMMGIGGFSPLNGFMKKEDWFSVCKNFTLADGTFWPIPITMSVSEEEAKKLKRGQKVALKYNKDINDISGTIEIDQVYEMTKKDKEMECKDIFTTTDSDHPGVKKVMEQKPFNVAGKVTTLSEGEFPIKYKGIYMTPEESRLNFAKKGWKTIAALQLRNPMHRSHEFLAKIAVEVCDGVFIHSLVGNLKPGDIPAEVRVKCIDALVDKYFVKKNVLQGGYPLDMRYGGPREALLHATFRQNYGCTHMIIGRDHAGVGDYYGPFDAQKIFDKIPYNADPKKRLLTQPMKIDWTFYCHKCDGMASLRTCPHTKKDRVIVSGTMVRKMLSEGKTLPDHFGRAESLKILADYYQHLDKSKKVTIKLQKFATGDAMK</sequence>
<name>SAT_ENTH1</name>
<keyword id="KW-0028">Amino-acid biosynthesis</keyword>
<keyword id="KW-0067">ATP-binding</keyword>
<keyword id="KW-0198">Cysteine biosynthesis</keyword>
<keyword id="KW-0486">Methionine biosynthesis</keyword>
<keyword id="KW-1025">Mitosome</keyword>
<keyword id="KW-0547">Nucleotide-binding</keyword>
<keyword id="KW-0548">Nucleotidyltransferase</keyword>
<keyword id="KW-1185">Reference proteome</keyword>
<keyword id="KW-0808">Transferase</keyword>
<evidence type="ECO:0000250" key="1">
    <source>
        <dbReference type="UniProtKB" id="P08536"/>
    </source>
</evidence>
<evidence type="ECO:0000269" key="2">
    <source>
    </source>
</evidence>
<evidence type="ECO:0000269" key="3">
    <source>
    </source>
</evidence>
<evidence type="ECO:0000303" key="4">
    <source>
    </source>
</evidence>
<evidence type="ECO:0000305" key="5"/>
<evidence type="ECO:0000305" key="6">
    <source>
    </source>
</evidence>
<evidence type="ECO:0000305" key="7">
    <source>
    </source>
</evidence>
<evidence type="ECO:0000312" key="8">
    <source>
        <dbReference type="EMBL" id="BAA32829.1"/>
    </source>
</evidence>
<evidence type="ECO:0000312" key="9">
    <source>
        <dbReference type="EMBL" id="EAL48184.1"/>
    </source>
</evidence>
<comment type="function">
    <text evidence="2">Catalyzes the first intracellular reaction of sulfate assimilation, forming adenosine-5'-phosphosulfate (APS) from inorganic sulfate and ATP.</text>
</comment>
<comment type="catalytic activity">
    <reaction evidence="3 6">
        <text>sulfate + ATP + H(+) = adenosine 5'-phosphosulfate + diphosphate</text>
        <dbReference type="Rhea" id="RHEA:18133"/>
        <dbReference type="ChEBI" id="CHEBI:15378"/>
        <dbReference type="ChEBI" id="CHEBI:16189"/>
        <dbReference type="ChEBI" id="CHEBI:30616"/>
        <dbReference type="ChEBI" id="CHEBI:33019"/>
        <dbReference type="ChEBI" id="CHEBI:58243"/>
        <dbReference type="EC" id="2.7.7.4"/>
    </reaction>
    <physiologicalReaction direction="left-to-right" evidence="6 7">
        <dbReference type="Rhea" id="RHEA:18134"/>
    </physiologicalReaction>
</comment>
<comment type="pathway">
    <text evidence="6">Sulfur metabolism; hydrogen sulfide biosynthesis; sulfite from sulfate: step 1/3.</text>
</comment>
<comment type="subcellular location">
    <subcellularLocation>
        <location evidence="2">Mitosome</location>
    </subcellularLocation>
</comment>
<comment type="developmental stage">
    <text evidence="2">Expressed in trophozoites (at protein level).</text>
</comment>
<comment type="similarity">
    <text evidence="5">Belongs to the sulfate adenylyltransferase family.</text>
</comment>
<protein>
    <recommendedName>
        <fullName evidence="5">Sulfate adenylyltransferase</fullName>
        <ecNumber evidence="3 6">2.7.7.4</ecNumber>
    </recommendedName>
    <alternativeName>
        <fullName evidence="4">ATP-sulfurylase</fullName>
    </alternativeName>
    <alternativeName>
        <fullName evidence="5">Sulfate adenylate transferase</fullName>
        <shortName evidence="5">SAT</shortName>
    </alternativeName>
</protein>
<accession>O76156</accession>
<accession>A0A175JG17</accession>
<accession>C4LVD3</accession>
<feature type="chain" id="PRO_0000105955" description="Sulfate adenylyltransferase">
    <location>
        <begin position="1"/>
        <end position="423"/>
    </location>
</feature>
<feature type="active site" evidence="1">
    <location>
        <position position="209"/>
    </location>
</feature>
<feature type="active site" evidence="1">
    <location>
        <position position="210"/>
    </location>
</feature>
<feature type="binding site" evidence="1">
    <location>
        <begin position="207"/>
        <end position="210"/>
    </location>
    <ligand>
        <name>ATP</name>
        <dbReference type="ChEBI" id="CHEBI:30616"/>
    </ligand>
</feature>
<feature type="binding site" evidence="1">
    <location>
        <position position="207"/>
    </location>
    <ligand>
        <name>sulfate</name>
        <dbReference type="ChEBI" id="CHEBI:16189"/>
    </ligand>
</feature>
<feature type="binding site" evidence="1">
    <location>
        <position position="209"/>
    </location>
    <ligand>
        <name>sulfate</name>
        <dbReference type="ChEBI" id="CHEBI:16189"/>
    </ligand>
</feature>
<feature type="binding site" evidence="1">
    <location>
        <begin position="301"/>
        <end position="304"/>
    </location>
    <ligand>
        <name>ATP</name>
        <dbReference type="ChEBI" id="CHEBI:30616"/>
    </ligand>
</feature>
<feature type="binding site" evidence="1">
    <location>
        <position position="305"/>
    </location>
    <ligand>
        <name>sulfate</name>
        <dbReference type="ChEBI" id="CHEBI:16189"/>
    </ligand>
</feature>
<feature type="site" description="Transition state stabilizer" evidence="1">
    <location>
        <position position="213"/>
    </location>
</feature>
<feature type="site" description="Transition state stabilizer" evidence="1">
    <location>
        <position position="216"/>
    </location>
</feature>
<dbReference type="EC" id="2.7.7.4" evidence="3 6"/>
<dbReference type="EMBL" id="DS571157">
    <property type="protein sequence ID" value="EAL48184.1"/>
    <property type="molecule type" value="Genomic_DNA"/>
</dbReference>
<dbReference type="EMBL" id="AB013399">
    <property type="protein sequence ID" value="BAA32829.1"/>
    <property type="molecule type" value="Genomic_DNA"/>
</dbReference>
<dbReference type="RefSeq" id="XP_653570.1">
    <property type="nucleotide sequence ID" value="XM_648478.1"/>
</dbReference>
<dbReference type="SMR" id="O76156"/>
<dbReference type="STRING" id="5759.C4LVD3"/>
<dbReference type="EnsemblProtists" id="GAT92621">
    <property type="protein sequence ID" value="GAT92621"/>
    <property type="gene ID" value="CL6EHI_197160"/>
</dbReference>
<dbReference type="EnsemblProtists" id="rna_EHI_197160-1">
    <property type="protein sequence ID" value="rna_EHI_197160-1"/>
    <property type="gene ID" value="EHI_197160"/>
</dbReference>
<dbReference type="GeneID" id="3407882"/>
<dbReference type="KEGG" id="ehi:EHI_197160"/>
<dbReference type="VEuPathDB" id="AmoebaDB:EHI5A_152340"/>
<dbReference type="VEuPathDB" id="AmoebaDB:EHI7A_191560"/>
<dbReference type="VEuPathDB" id="AmoebaDB:EHI8A_232720"/>
<dbReference type="VEuPathDB" id="AmoebaDB:EHI_197160"/>
<dbReference type="VEuPathDB" id="AmoebaDB:KM1_292970"/>
<dbReference type="eggNOG" id="KOG0636">
    <property type="taxonomic scope" value="Eukaryota"/>
</dbReference>
<dbReference type="HOGENOM" id="CLU_022950_1_1_1"/>
<dbReference type="OMA" id="MEMRYAG"/>
<dbReference type="OrthoDB" id="468at2759"/>
<dbReference type="UniPathway" id="UPA00140">
    <property type="reaction ID" value="UER00204"/>
</dbReference>
<dbReference type="Proteomes" id="UP000001926">
    <property type="component" value="Partially assembled WGS sequence"/>
</dbReference>
<dbReference type="GO" id="GO:0032047">
    <property type="term" value="C:mitosome"/>
    <property type="evidence" value="ECO:0000314"/>
    <property type="project" value="UniProtKB"/>
</dbReference>
<dbReference type="GO" id="GO:0005524">
    <property type="term" value="F:ATP binding"/>
    <property type="evidence" value="ECO:0007669"/>
    <property type="project" value="UniProtKB-KW"/>
</dbReference>
<dbReference type="GO" id="GO:0004781">
    <property type="term" value="F:sulfate adenylyltransferase (ATP) activity"/>
    <property type="evidence" value="ECO:0000314"/>
    <property type="project" value="UniProtKB"/>
</dbReference>
<dbReference type="GO" id="GO:0019344">
    <property type="term" value="P:cysteine biosynthetic process"/>
    <property type="evidence" value="ECO:0007669"/>
    <property type="project" value="UniProtKB-KW"/>
</dbReference>
<dbReference type="GO" id="GO:0070814">
    <property type="term" value="P:hydrogen sulfide biosynthetic process"/>
    <property type="evidence" value="ECO:0007669"/>
    <property type="project" value="UniProtKB-UniPathway"/>
</dbReference>
<dbReference type="GO" id="GO:0009086">
    <property type="term" value="P:methionine biosynthetic process"/>
    <property type="evidence" value="ECO:0007669"/>
    <property type="project" value="UniProtKB-KW"/>
</dbReference>
<dbReference type="GO" id="GO:0000103">
    <property type="term" value="P:sulfate assimilation"/>
    <property type="evidence" value="ECO:0007669"/>
    <property type="project" value="InterPro"/>
</dbReference>
<dbReference type="CDD" id="cd00517">
    <property type="entry name" value="ATPS"/>
    <property type="match status" value="1"/>
</dbReference>
<dbReference type="Gene3D" id="3.40.50.620">
    <property type="entry name" value="HUPs"/>
    <property type="match status" value="1"/>
</dbReference>
<dbReference type="Gene3D" id="3.10.400.10">
    <property type="entry name" value="Sulfate adenylyltransferase"/>
    <property type="match status" value="1"/>
</dbReference>
<dbReference type="HAMAP" id="MF_00066">
    <property type="entry name" value="Sulf_adenylyltr"/>
    <property type="match status" value="1"/>
</dbReference>
<dbReference type="InterPro" id="IPR025980">
    <property type="entry name" value="ATP-Sase_PUA-like_dom"/>
</dbReference>
<dbReference type="InterPro" id="IPR015947">
    <property type="entry name" value="PUA-like_sf"/>
</dbReference>
<dbReference type="InterPro" id="IPR014729">
    <property type="entry name" value="Rossmann-like_a/b/a_fold"/>
</dbReference>
<dbReference type="InterPro" id="IPR020792">
    <property type="entry name" value="SO4_adenylyltransferase_pro"/>
</dbReference>
<dbReference type="InterPro" id="IPR024951">
    <property type="entry name" value="Sulfurylase_cat_dom"/>
</dbReference>
<dbReference type="InterPro" id="IPR002650">
    <property type="entry name" value="Sulphate_adenylyltransferase"/>
</dbReference>
<dbReference type="NCBIfam" id="NF003166">
    <property type="entry name" value="PRK04149.1"/>
    <property type="match status" value="1"/>
</dbReference>
<dbReference type="NCBIfam" id="TIGR00339">
    <property type="entry name" value="sopT"/>
    <property type="match status" value="1"/>
</dbReference>
<dbReference type="PANTHER" id="PTHR43509">
    <property type="match status" value="1"/>
</dbReference>
<dbReference type="PANTHER" id="PTHR43509:SF1">
    <property type="entry name" value="SULFATE ADENYLYLTRANSFERASE"/>
    <property type="match status" value="1"/>
</dbReference>
<dbReference type="Pfam" id="PF01747">
    <property type="entry name" value="ATP-sulfurylase"/>
    <property type="match status" value="1"/>
</dbReference>
<dbReference type="Pfam" id="PF14306">
    <property type="entry name" value="PUA_2"/>
    <property type="match status" value="1"/>
</dbReference>
<dbReference type="SUPFAM" id="SSF52374">
    <property type="entry name" value="Nucleotidylyl transferase"/>
    <property type="match status" value="1"/>
</dbReference>
<dbReference type="SUPFAM" id="SSF88697">
    <property type="entry name" value="PUA domain-like"/>
    <property type="match status" value="1"/>
</dbReference>
<reference evidence="8" key="1">
    <citation type="journal article" date="1998" name="Biochim. Biophys. Acta">
        <title>Cloning and bacterial expression of adenosine-5'-triphosphate sulfurylase from the enteric protozoan parasite Entamoeba histolytica.</title>
        <authorList>
            <person name="Nozaki T."/>
            <person name="Arase T."/>
            <person name="Shigeta Y."/>
            <person name="Asai T."/>
            <person name="Leustek T."/>
            <person name="Takeuchi T."/>
        </authorList>
    </citation>
    <scope>NUCLEOTIDE SEQUENCE [GENOMIC DNA]</scope>
    <scope>CATALYTIC ACTIVITY</scope>
    <source>
        <strain evidence="8">ATCC 30459 / HM-1:IMSS / ABRM</strain>
    </source>
</reference>
<reference evidence="9" key="2">
    <citation type="journal article" date="2005" name="Nature">
        <title>The genome of the protist parasite Entamoeba histolytica.</title>
        <authorList>
            <person name="Loftus B.J."/>
            <person name="Anderson I."/>
            <person name="Davies R."/>
            <person name="Alsmark U.C."/>
            <person name="Samuelson J."/>
            <person name="Amedeo P."/>
            <person name="Roncaglia P."/>
            <person name="Berriman M."/>
            <person name="Hirt R.P."/>
            <person name="Mann B.J."/>
            <person name="Nozaki T."/>
            <person name="Suh B."/>
            <person name="Pop M."/>
            <person name="Duchene M."/>
            <person name="Ackers J."/>
            <person name="Tannich E."/>
            <person name="Leippe M."/>
            <person name="Hofer M."/>
            <person name="Bruchhaus I."/>
            <person name="Willhoeft U."/>
            <person name="Bhattacharya A."/>
            <person name="Chillingworth T."/>
            <person name="Churcher C.M."/>
            <person name="Hance Z."/>
            <person name="Harris B."/>
            <person name="Harris D."/>
            <person name="Jagels K."/>
            <person name="Moule S."/>
            <person name="Mungall K.L."/>
            <person name="Ormond D."/>
            <person name="Squares R."/>
            <person name="Whitehead S."/>
            <person name="Quail M.A."/>
            <person name="Rabbinowitsch E."/>
            <person name="Norbertczak H."/>
            <person name="Price C."/>
            <person name="Wang Z."/>
            <person name="Guillen N."/>
            <person name="Gilchrist C."/>
            <person name="Stroup S.E."/>
            <person name="Bhattacharya S."/>
            <person name="Lohia A."/>
            <person name="Foster P.G."/>
            <person name="Sicheritz-Ponten T."/>
            <person name="Weber C."/>
            <person name="Singh U."/>
            <person name="Mukherjee C."/>
            <person name="El-Sayed N.M.A."/>
            <person name="Petri W.A."/>
            <person name="Clark C.G."/>
            <person name="Embley T.M."/>
            <person name="Barrell B.G."/>
            <person name="Fraser C.M."/>
            <person name="Hall N."/>
        </authorList>
    </citation>
    <scope>NUCLEOTIDE SEQUENCE [LARGE SCALE GENOMIC DNA]</scope>
    <source>
        <strain evidence="9">ATCC 30459 / HM-1:IMSS / ABRM</strain>
    </source>
</reference>
<reference key="3">
    <citation type="journal article" date="2009" name="Proc. Natl. Acad. Sci. U.S.A.">
        <title>Mitosomes in Entamoeba histolytica contain a sulfate activation pathway.</title>
        <authorList>
            <person name="Mi-ichi F."/>
            <person name="Abu Yousuf M."/>
            <person name="Nakada-Tsukui K."/>
            <person name="Nozaki T."/>
        </authorList>
    </citation>
    <scope>FUNCTION</scope>
    <scope>CATALYTIC ACTIVITY</scope>
    <scope>PATHWAY</scope>
    <scope>SUBCELLULAR LOCATION</scope>
    <scope>DEVELOPMENTAL STAGE</scope>
</reference>
<organism evidence="9">
    <name type="scientific">Entamoeba histolytica (strain ATCC 30459 / HM-1:IMSS / ABRM)</name>
    <dbReference type="NCBI Taxonomy" id="294381"/>
    <lineage>
        <taxon>Eukaryota</taxon>
        <taxon>Amoebozoa</taxon>
        <taxon>Evosea</taxon>
        <taxon>Archamoebae</taxon>
        <taxon>Mastigamoebida</taxon>
        <taxon>Entamoebidae</taxon>
        <taxon>Entamoeba</taxon>
    </lineage>
</organism>
<gene>
    <name evidence="4" type="primary">AS</name>
    <name evidence="9" type="ORF">EHI_197160</name>
</gene>
<proteinExistence type="evidence at protein level"/>